<accession>Q8BI67</accession>
<accession>Q8BI98</accession>
<accession>Q8BIB7</accession>
<name>ZN473_MOUSE</name>
<keyword id="KW-0238">DNA-binding</keyword>
<keyword id="KW-1017">Isopeptide bond</keyword>
<keyword id="KW-0479">Metal-binding</keyword>
<keyword id="KW-0539">Nucleus</keyword>
<keyword id="KW-1185">Reference proteome</keyword>
<keyword id="KW-0677">Repeat</keyword>
<keyword id="KW-0832">Ubl conjugation</keyword>
<keyword id="KW-0862">Zinc</keyword>
<keyword id="KW-0863">Zinc-finger</keyword>
<evidence type="ECO:0000250" key="1"/>
<evidence type="ECO:0000250" key="2">
    <source>
        <dbReference type="UniProtKB" id="Q8WTR7"/>
    </source>
</evidence>
<evidence type="ECO:0000255" key="3">
    <source>
        <dbReference type="PROSITE-ProRule" id="PRU00042"/>
    </source>
</evidence>
<evidence type="ECO:0000255" key="4">
    <source>
        <dbReference type="PROSITE-ProRule" id="PRU00119"/>
    </source>
</evidence>
<evidence type="ECO:0000256" key="5">
    <source>
        <dbReference type="SAM" id="MobiDB-lite"/>
    </source>
</evidence>
<evidence type="ECO:0000305" key="6"/>
<organism>
    <name type="scientific">Mus musculus</name>
    <name type="common">Mouse</name>
    <dbReference type="NCBI Taxonomy" id="10090"/>
    <lineage>
        <taxon>Eukaryota</taxon>
        <taxon>Metazoa</taxon>
        <taxon>Chordata</taxon>
        <taxon>Craniata</taxon>
        <taxon>Vertebrata</taxon>
        <taxon>Euteleostomi</taxon>
        <taxon>Mammalia</taxon>
        <taxon>Eutheria</taxon>
        <taxon>Euarchontoglires</taxon>
        <taxon>Glires</taxon>
        <taxon>Rodentia</taxon>
        <taxon>Myomorpha</taxon>
        <taxon>Muroidea</taxon>
        <taxon>Muridae</taxon>
        <taxon>Murinae</taxon>
        <taxon>Mus</taxon>
        <taxon>Mus</taxon>
    </lineage>
</organism>
<comment type="function">
    <text evidence="1">Involved in histone 3'-end pre-mRNA processing by associating with U7 snRNP and interacting with SLBP/pre-mRNA complex. Increases histone 3'-end pre-mRNA processing but has no effect on U7 snRNP levels, when overexpressed. Required for cell cycle progression from G1 to S phases (By similarity).</text>
</comment>
<comment type="subunit">
    <text evidence="1">Interacts with the SLBP/pre-mRNA complex but not with SLBP alone. Interacts with LSM11 in a U7 snRNP-dependent manner (By similarity).</text>
</comment>
<comment type="subcellular location">
    <subcellularLocation>
        <location evidence="1">Nucleus</location>
    </subcellularLocation>
    <text evidence="1">Stable component of Cajal bodies (CBs). Colocalizes with SMN, coilin and U7 snRNA (By similarity).</text>
</comment>
<comment type="domain">
    <text evidence="1">The C2H2-type zinc fingers are involved in discrete Cajal bodies localization, interaction with LSM11 and the SLBP/RNA complex and histone pre-mRNA processing.</text>
</comment>
<comment type="similarity">
    <text evidence="6">Belongs to the krueppel C2H2-type zinc-finger protein family.</text>
</comment>
<feature type="chain" id="PRO_0000047605" description="Zinc finger protein 473 homolog">
    <location>
        <begin position="1"/>
        <end position="892"/>
    </location>
</feature>
<feature type="domain" description="KRAB" evidence="4">
    <location>
        <begin position="23"/>
        <end position="101"/>
    </location>
</feature>
<feature type="zinc finger region" description="C2H2-type 1" evidence="3">
    <location>
        <begin position="209"/>
        <end position="231"/>
    </location>
</feature>
<feature type="zinc finger region" description="C2H2-type 2" evidence="3">
    <location>
        <begin position="265"/>
        <end position="287"/>
    </location>
</feature>
<feature type="zinc finger region" description="C2H2-type 3" evidence="3">
    <location>
        <begin position="377"/>
        <end position="399"/>
    </location>
</feature>
<feature type="zinc finger region" description="C2H2-type 4" evidence="3">
    <location>
        <begin position="404"/>
        <end position="426"/>
    </location>
</feature>
<feature type="zinc finger region" description="C2H2-type 5" evidence="3">
    <location>
        <begin position="432"/>
        <end position="454"/>
    </location>
</feature>
<feature type="zinc finger region" description="C2H2-type 6" evidence="3">
    <location>
        <begin position="460"/>
        <end position="482"/>
    </location>
</feature>
<feature type="zinc finger region" description="C2H2-type 7" evidence="3">
    <location>
        <begin position="488"/>
        <end position="510"/>
    </location>
</feature>
<feature type="zinc finger region" description="C2H2-type 8" evidence="3">
    <location>
        <begin position="516"/>
        <end position="538"/>
    </location>
</feature>
<feature type="zinc finger region" description="C2H2-type 9" evidence="3">
    <location>
        <begin position="544"/>
        <end position="566"/>
    </location>
</feature>
<feature type="zinc finger region" description="C2H2-type 10" evidence="3">
    <location>
        <begin position="572"/>
        <end position="594"/>
    </location>
</feature>
<feature type="zinc finger region" description="C2H2-type 11; degenerate" evidence="3">
    <location>
        <begin position="697"/>
        <end position="719"/>
    </location>
</feature>
<feature type="zinc finger region" description="C2H2-type 12" evidence="3">
    <location>
        <begin position="725"/>
        <end position="747"/>
    </location>
</feature>
<feature type="zinc finger region" description="C2H2-type 13" evidence="3">
    <location>
        <begin position="753"/>
        <end position="775"/>
    </location>
</feature>
<feature type="zinc finger region" description="C2H2-type 14" evidence="3">
    <location>
        <begin position="781"/>
        <end position="803"/>
    </location>
</feature>
<feature type="zinc finger region" description="C2H2-type 15" evidence="3">
    <location>
        <begin position="809"/>
        <end position="831"/>
    </location>
</feature>
<feature type="zinc finger region" description="C2H2-type 16" evidence="3">
    <location>
        <begin position="837"/>
        <end position="859"/>
    </location>
</feature>
<feature type="zinc finger region" description="C2H2-type 17" evidence="3">
    <location>
        <begin position="865"/>
        <end position="887"/>
    </location>
</feature>
<feature type="region of interest" description="Disordered" evidence="5">
    <location>
        <begin position="66"/>
        <end position="97"/>
    </location>
</feature>
<feature type="region of interest" description="Disordered" evidence="5">
    <location>
        <begin position="134"/>
        <end position="203"/>
    </location>
</feature>
<feature type="region of interest" description="Disordered" evidence="5">
    <location>
        <begin position="297"/>
        <end position="370"/>
    </location>
</feature>
<feature type="compositionally biased region" description="Polar residues" evidence="5">
    <location>
        <begin position="66"/>
        <end position="76"/>
    </location>
</feature>
<feature type="compositionally biased region" description="Polar residues" evidence="5">
    <location>
        <begin position="84"/>
        <end position="97"/>
    </location>
</feature>
<feature type="compositionally biased region" description="Basic and acidic residues" evidence="5">
    <location>
        <begin position="138"/>
        <end position="156"/>
    </location>
</feature>
<feature type="compositionally biased region" description="Basic and acidic residues" evidence="5">
    <location>
        <begin position="190"/>
        <end position="203"/>
    </location>
</feature>
<feature type="compositionally biased region" description="Polar residues" evidence="5">
    <location>
        <begin position="297"/>
        <end position="308"/>
    </location>
</feature>
<feature type="compositionally biased region" description="Basic and acidic residues" evidence="5">
    <location>
        <begin position="313"/>
        <end position="323"/>
    </location>
</feature>
<feature type="compositionally biased region" description="Basic and acidic residues" evidence="5">
    <location>
        <begin position="332"/>
        <end position="353"/>
    </location>
</feature>
<feature type="cross-link" description="Glycyl lysine isopeptide (Lys-Gly) (interchain with G-Cter in SUMO2)" evidence="2">
    <location>
        <position position="476"/>
    </location>
</feature>
<feature type="cross-link" description="Glycyl lysine isopeptide (Lys-Gly) (interchain with G-Cter in SUMO2)" evidence="2">
    <location>
        <position position="602"/>
    </location>
</feature>
<feature type="sequence conflict" description="In Ref. 1; BAC29437." evidence="6" ref="1">
    <original>TD</original>
    <variation>N</variation>
    <location>
        <begin position="65"/>
        <end position="66"/>
    </location>
</feature>
<feature type="sequence conflict" description="In Ref. 1; BAC26780." evidence="6" ref="1">
    <original>Q</original>
    <variation>K</variation>
    <location>
        <position position="396"/>
    </location>
</feature>
<proteinExistence type="evidence at transcript level"/>
<reference key="1">
    <citation type="journal article" date="2005" name="Science">
        <title>The transcriptional landscape of the mammalian genome.</title>
        <authorList>
            <person name="Carninci P."/>
            <person name="Kasukawa T."/>
            <person name="Katayama S."/>
            <person name="Gough J."/>
            <person name="Frith M.C."/>
            <person name="Maeda N."/>
            <person name="Oyama R."/>
            <person name="Ravasi T."/>
            <person name="Lenhard B."/>
            <person name="Wells C."/>
            <person name="Kodzius R."/>
            <person name="Shimokawa K."/>
            <person name="Bajic V.B."/>
            <person name="Brenner S.E."/>
            <person name="Batalov S."/>
            <person name="Forrest A.R."/>
            <person name="Zavolan M."/>
            <person name="Davis M.J."/>
            <person name="Wilming L.G."/>
            <person name="Aidinis V."/>
            <person name="Allen J.E."/>
            <person name="Ambesi-Impiombato A."/>
            <person name="Apweiler R."/>
            <person name="Aturaliya R.N."/>
            <person name="Bailey T.L."/>
            <person name="Bansal M."/>
            <person name="Baxter L."/>
            <person name="Beisel K.W."/>
            <person name="Bersano T."/>
            <person name="Bono H."/>
            <person name="Chalk A.M."/>
            <person name="Chiu K.P."/>
            <person name="Choudhary V."/>
            <person name="Christoffels A."/>
            <person name="Clutterbuck D.R."/>
            <person name="Crowe M.L."/>
            <person name="Dalla E."/>
            <person name="Dalrymple B.P."/>
            <person name="de Bono B."/>
            <person name="Della Gatta G."/>
            <person name="di Bernardo D."/>
            <person name="Down T."/>
            <person name="Engstrom P."/>
            <person name="Fagiolini M."/>
            <person name="Faulkner G."/>
            <person name="Fletcher C.F."/>
            <person name="Fukushima T."/>
            <person name="Furuno M."/>
            <person name="Futaki S."/>
            <person name="Gariboldi M."/>
            <person name="Georgii-Hemming P."/>
            <person name="Gingeras T.R."/>
            <person name="Gojobori T."/>
            <person name="Green R.E."/>
            <person name="Gustincich S."/>
            <person name="Harbers M."/>
            <person name="Hayashi Y."/>
            <person name="Hensch T.K."/>
            <person name="Hirokawa N."/>
            <person name="Hill D."/>
            <person name="Huminiecki L."/>
            <person name="Iacono M."/>
            <person name="Ikeo K."/>
            <person name="Iwama A."/>
            <person name="Ishikawa T."/>
            <person name="Jakt M."/>
            <person name="Kanapin A."/>
            <person name="Katoh M."/>
            <person name="Kawasawa Y."/>
            <person name="Kelso J."/>
            <person name="Kitamura H."/>
            <person name="Kitano H."/>
            <person name="Kollias G."/>
            <person name="Krishnan S.P."/>
            <person name="Kruger A."/>
            <person name="Kummerfeld S.K."/>
            <person name="Kurochkin I.V."/>
            <person name="Lareau L.F."/>
            <person name="Lazarevic D."/>
            <person name="Lipovich L."/>
            <person name="Liu J."/>
            <person name="Liuni S."/>
            <person name="McWilliam S."/>
            <person name="Madan Babu M."/>
            <person name="Madera M."/>
            <person name="Marchionni L."/>
            <person name="Matsuda H."/>
            <person name="Matsuzawa S."/>
            <person name="Miki H."/>
            <person name="Mignone F."/>
            <person name="Miyake S."/>
            <person name="Morris K."/>
            <person name="Mottagui-Tabar S."/>
            <person name="Mulder N."/>
            <person name="Nakano N."/>
            <person name="Nakauchi H."/>
            <person name="Ng P."/>
            <person name="Nilsson R."/>
            <person name="Nishiguchi S."/>
            <person name="Nishikawa S."/>
            <person name="Nori F."/>
            <person name="Ohara O."/>
            <person name="Okazaki Y."/>
            <person name="Orlando V."/>
            <person name="Pang K.C."/>
            <person name="Pavan W.J."/>
            <person name="Pavesi G."/>
            <person name="Pesole G."/>
            <person name="Petrovsky N."/>
            <person name="Piazza S."/>
            <person name="Reed J."/>
            <person name="Reid J.F."/>
            <person name="Ring B.Z."/>
            <person name="Ringwald M."/>
            <person name="Rost B."/>
            <person name="Ruan Y."/>
            <person name="Salzberg S.L."/>
            <person name="Sandelin A."/>
            <person name="Schneider C."/>
            <person name="Schoenbach C."/>
            <person name="Sekiguchi K."/>
            <person name="Semple C.A."/>
            <person name="Seno S."/>
            <person name="Sessa L."/>
            <person name="Sheng Y."/>
            <person name="Shibata Y."/>
            <person name="Shimada H."/>
            <person name="Shimada K."/>
            <person name="Silva D."/>
            <person name="Sinclair B."/>
            <person name="Sperling S."/>
            <person name="Stupka E."/>
            <person name="Sugiura K."/>
            <person name="Sultana R."/>
            <person name="Takenaka Y."/>
            <person name="Taki K."/>
            <person name="Tammoja K."/>
            <person name="Tan S.L."/>
            <person name="Tang S."/>
            <person name="Taylor M.S."/>
            <person name="Tegner J."/>
            <person name="Teichmann S.A."/>
            <person name="Ueda H.R."/>
            <person name="van Nimwegen E."/>
            <person name="Verardo R."/>
            <person name="Wei C.L."/>
            <person name="Yagi K."/>
            <person name="Yamanishi H."/>
            <person name="Zabarovsky E."/>
            <person name="Zhu S."/>
            <person name="Zimmer A."/>
            <person name="Hide W."/>
            <person name="Bult C."/>
            <person name="Grimmond S.M."/>
            <person name="Teasdale R.D."/>
            <person name="Liu E.T."/>
            <person name="Brusic V."/>
            <person name="Quackenbush J."/>
            <person name="Wahlestedt C."/>
            <person name="Mattick J.S."/>
            <person name="Hume D.A."/>
            <person name="Kai C."/>
            <person name="Sasaki D."/>
            <person name="Tomaru Y."/>
            <person name="Fukuda S."/>
            <person name="Kanamori-Katayama M."/>
            <person name="Suzuki M."/>
            <person name="Aoki J."/>
            <person name="Arakawa T."/>
            <person name="Iida J."/>
            <person name="Imamura K."/>
            <person name="Itoh M."/>
            <person name="Kato T."/>
            <person name="Kawaji H."/>
            <person name="Kawagashira N."/>
            <person name="Kawashima T."/>
            <person name="Kojima M."/>
            <person name="Kondo S."/>
            <person name="Konno H."/>
            <person name="Nakano K."/>
            <person name="Ninomiya N."/>
            <person name="Nishio T."/>
            <person name="Okada M."/>
            <person name="Plessy C."/>
            <person name="Shibata K."/>
            <person name="Shiraki T."/>
            <person name="Suzuki S."/>
            <person name="Tagami M."/>
            <person name="Waki K."/>
            <person name="Watahiki A."/>
            <person name="Okamura-Oho Y."/>
            <person name="Suzuki H."/>
            <person name="Kawai J."/>
            <person name="Hayashizaki Y."/>
        </authorList>
    </citation>
    <scope>NUCLEOTIDE SEQUENCE [LARGE SCALE MRNA]</scope>
    <source>
        <strain>C57BL/6J</strain>
        <tissue>Bone</tissue>
        <tissue>Testis</tissue>
    </source>
</reference>
<gene>
    <name type="primary">Znf473</name>
    <name type="synonym">Zfp100</name>
    <name type="synonym">Zfp473</name>
</gene>
<protein>
    <recommendedName>
        <fullName>Zinc finger protein 473 homolog</fullName>
    </recommendedName>
    <alternativeName>
        <fullName>Zinc finger protein 100</fullName>
        <shortName>Zfp-100</shortName>
    </alternativeName>
</protein>
<sequence length="892" mass="101741">MERKEDDLKGGCWNQPAVAEEFETLKDLAMDFTVEDWKDLESEWDQRDLFWDVTLNHYQDMFSFTDTSQPSLTSQPDVREELEATSTEVPETKSSPLQSGFVEEDFSQIMEIFSNGQLNFEACIGEDWLNSFLGDPESLPRPDISDKESPADHQSPESKSGLSPGPPLCTREDAVMSASPEKTLTPVILKESRSDLSQEDSVQGHEKPYKCSECGESFSQSHHLIQHWVLHTSGEPPIWREQQRGLSQGAHFPMCPGTPASYESYTCQECGKRFSQNVYLQWHQKIHTGEKLCKTQSDSNLEGLSRSPSVEPGKQRLSKDTDSAKPSTIHGQDQEKPPTGESRDQENLHESQPGDRPSVLHPKPLRHQKTPTNAKCFRCKKCGETFSGAFHLAKHQRAHAQRLYKCASCPAVFNLSKHCFQHRKSHFPSAACECQGCRKSFNWRSSLIKHQAIHKGEKPYKCDECGKAFNHSSTLKIHQRIHSGQKPHKCSECGKAFCRRTDLTEHQRVHSGFRPHQCPVCARTFNRPSHLVRHRLRHAEERHFGCAKCKETFIYKEQLERHNKIHTIEGLYECKQCGEHFICRSTLNCHLSIHIRENTSEKVVGQNSQHTEKCFKNTKCRKAPNHSRYLGQHEKIHAQVTSGECDPCGETYDQSVQPICHQSICAGVKPSECAEPEKCTRNTSASEHHPSQREPSFKCDIYNRAFKQRAHLSKHQLIHITEKPFKCNECDRAFKQSNYLIQHQKTHTAEKHFECSECGKTFHQRSCLSKHQKIHSGEKPFKCGDCGKAFISGAQLIRHQRIHTGEKPYVCQECGKTFSQSSCLTLHLRIHTGEKPYTCGTCGKAFAQRANQRKHERIHTGEKPYACGLCGKAFGLRTHLQQHQRIHTKAKP</sequence>
<dbReference type="EMBL" id="AK030093">
    <property type="protein sequence ID" value="BAC26780.1"/>
    <property type="molecule type" value="mRNA"/>
</dbReference>
<dbReference type="EMBL" id="AK036453">
    <property type="protein sequence ID" value="BAC29437.1"/>
    <property type="molecule type" value="mRNA"/>
</dbReference>
<dbReference type="EMBL" id="AK050747">
    <property type="protein sequence ID" value="BAC34403.1"/>
    <property type="molecule type" value="mRNA"/>
</dbReference>
<dbReference type="CCDS" id="CCDS21213.1"/>
<dbReference type="RefSeq" id="NP_001276765.1">
    <property type="nucleotide sequence ID" value="NM_001289836.1"/>
</dbReference>
<dbReference type="RefSeq" id="NP_001276766.1">
    <property type="nucleotide sequence ID" value="NM_001289837.1"/>
</dbReference>
<dbReference type="RefSeq" id="NP_001276767.1">
    <property type="nucleotide sequence ID" value="NM_001289838.1"/>
</dbReference>
<dbReference type="RefSeq" id="NP_001276768.1">
    <property type="nucleotide sequence ID" value="NM_001289839.1"/>
</dbReference>
<dbReference type="RefSeq" id="NP_848849.2">
    <property type="nucleotide sequence ID" value="NM_178734.4"/>
</dbReference>
<dbReference type="RefSeq" id="XP_006540941.1">
    <property type="nucleotide sequence ID" value="XM_006540878.1"/>
</dbReference>
<dbReference type="RefSeq" id="XP_006540942.1">
    <property type="nucleotide sequence ID" value="XM_006540879.1"/>
</dbReference>
<dbReference type="RefSeq" id="XP_006540944.1">
    <property type="nucleotide sequence ID" value="XM_006540881.3"/>
</dbReference>
<dbReference type="RefSeq" id="XP_006540945.1">
    <property type="nucleotide sequence ID" value="XM_006540882.1"/>
</dbReference>
<dbReference type="SMR" id="Q8BI67"/>
<dbReference type="BioGRID" id="232592">
    <property type="interactions" value="32"/>
</dbReference>
<dbReference type="FunCoup" id="Q8BI67">
    <property type="interactions" value="15"/>
</dbReference>
<dbReference type="IntAct" id="Q8BI67">
    <property type="interactions" value="7"/>
</dbReference>
<dbReference type="STRING" id="10090.ENSMUSP00000051069"/>
<dbReference type="iPTMnet" id="Q8BI67"/>
<dbReference type="PhosphoSitePlus" id="Q8BI67"/>
<dbReference type="jPOST" id="Q8BI67"/>
<dbReference type="PaxDb" id="10090-ENSMUSP00000051069"/>
<dbReference type="Antibodypedia" id="32254">
    <property type="antibodies" value="120 antibodies from 21 providers"/>
</dbReference>
<dbReference type="DNASU" id="243963"/>
<dbReference type="Ensembl" id="ENSMUST00000060270.13">
    <property type="protein sequence ID" value="ENSMUSP00000051069.7"/>
    <property type="gene ID" value="ENSMUSG00000048012.20"/>
</dbReference>
<dbReference type="Ensembl" id="ENSMUST00000120074.8">
    <property type="protein sequence ID" value="ENSMUSP00000113774.2"/>
    <property type="gene ID" value="ENSMUSG00000048012.20"/>
</dbReference>
<dbReference type="GeneID" id="243963"/>
<dbReference type="KEGG" id="mmu:243963"/>
<dbReference type="UCSC" id="uc009gqn.2">
    <property type="organism name" value="mouse"/>
</dbReference>
<dbReference type="AGR" id="MGI:2442697"/>
<dbReference type="CTD" id="243963"/>
<dbReference type="MGI" id="MGI:2442697">
    <property type="gene designation" value="Zfp473"/>
</dbReference>
<dbReference type="VEuPathDB" id="HostDB:ENSMUSG00000048012"/>
<dbReference type="eggNOG" id="KOG1721">
    <property type="taxonomic scope" value="Eukaryota"/>
</dbReference>
<dbReference type="GeneTree" id="ENSGT00840000130048"/>
<dbReference type="InParanoid" id="Q8BI67"/>
<dbReference type="OMA" id="YSCAKCK"/>
<dbReference type="OrthoDB" id="9411774at2759"/>
<dbReference type="PhylomeDB" id="Q8BI67"/>
<dbReference type="TreeFam" id="TF350932"/>
<dbReference type="Reactome" id="R-MMU-111367">
    <property type="pathway name" value="SLBP independent Processing of Histone Pre-mRNAs"/>
</dbReference>
<dbReference type="Reactome" id="R-MMU-212436">
    <property type="pathway name" value="Generic Transcription Pathway"/>
</dbReference>
<dbReference type="Reactome" id="R-MMU-73856">
    <property type="pathway name" value="RNA Polymerase II Transcription Termination"/>
</dbReference>
<dbReference type="Reactome" id="R-MMU-77588">
    <property type="pathway name" value="SLBP Dependent Processing of Replication-Dependent Histone Pre-mRNAs"/>
</dbReference>
<dbReference type="BioGRID-ORCS" id="243963">
    <property type="hits" value="3 hits in 82 CRISPR screens"/>
</dbReference>
<dbReference type="ChiTaRS" id="Zbtb17">
    <property type="organism name" value="mouse"/>
</dbReference>
<dbReference type="PRO" id="PR:Q8BI67"/>
<dbReference type="Proteomes" id="UP000000589">
    <property type="component" value="Chromosome 7"/>
</dbReference>
<dbReference type="RNAct" id="Q8BI67">
    <property type="molecule type" value="protein"/>
</dbReference>
<dbReference type="Bgee" id="ENSMUSG00000048012">
    <property type="expression patterns" value="Expressed in primary oocyte and 81 other cell types or tissues"/>
</dbReference>
<dbReference type="ExpressionAtlas" id="Q8BI67">
    <property type="expression patterns" value="baseline and differential"/>
</dbReference>
<dbReference type="GO" id="GO:0015030">
    <property type="term" value="C:Cajal body"/>
    <property type="evidence" value="ECO:0000250"/>
    <property type="project" value="UniProtKB"/>
</dbReference>
<dbReference type="GO" id="GO:0003677">
    <property type="term" value="F:DNA binding"/>
    <property type="evidence" value="ECO:0007669"/>
    <property type="project" value="UniProtKB-KW"/>
</dbReference>
<dbReference type="GO" id="GO:0008270">
    <property type="term" value="F:zinc ion binding"/>
    <property type="evidence" value="ECO:0007669"/>
    <property type="project" value="UniProtKB-KW"/>
</dbReference>
<dbReference type="GO" id="GO:0006398">
    <property type="term" value="P:mRNA 3'-end processing by stem-loop binding and cleavage"/>
    <property type="evidence" value="ECO:0000250"/>
    <property type="project" value="UniProtKB"/>
</dbReference>
<dbReference type="GO" id="GO:0006355">
    <property type="term" value="P:regulation of DNA-templated transcription"/>
    <property type="evidence" value="ECO:0007669"/>
    <property type="project" value="InterPro"/>
</dbReference>
<dbReference type="CDD" id="cd07765">
    <property type="entry name" value="KRAB_A-box"/>
    <property type="match status" value="1"/>
</dbReference>
<dbReference type="FunFam" id="3.30.160.60:FF:004479">
    <property type="match status" value="1"/>
</dbReference>
<dbReference type="FunFam" id="3.30.160.60:FF:000040">
    <property type="entry name" value="RB associated KRAB zinc finger"/>
    <property type="match status" value="1"/>
</dbReference>
<dbReference type="FunFam" id="3.30.160.60:FF:002239">
    <property type="entry name" value="Zinc finger protein 226"/>
    <property type="match status" value="1"/>
</dbReference>
<dbReference type="FunFam" id="3.30.160.60:FF:002343">
    <property type="entry name" value="Zinc finger protein 33A"/>
    <property type="match status" value="1"/>
</dbReference>
<dbReference type="FunFam" id="3.30.160.60:FF:000690">
    <property type="entry name" value="Zinc finger protein 354C"/>
    <property type="match status" value="1"/>
</dbReference>
<dbReference type="FunFam" id="3.30.160.60:FF:000023">
    <property type="entry name" value="zinc finger protein 37 homolog"/>
    <property type="match status" value="1"/>
</dbReference>
<dbReference type="FunFam" id="3.30.160.60:FF:002090">
    <property type="entry name" value="Zinc finger protein 473"/>
    <property type="match status" value="1"/>
</dbReference>
<dbReference type="FunFam" id="3.30.160.60:FF:000340">
    <property type="entry name" value="zinc finger protein 473 isoform X1"/>
    <property type="match status" value="1"/>
</dbReference>
<dbReference type="FunFam" id="3.30.160.60:FF:000052">
    <property type="entry name" value="zinc finger protein 546 isoform X1"/>
    <property type="match status" value="2"/>
</dbReference>
<dbReference type="FunFam" id="3.30.160.60:FF:002533">
    <property type="entry name" value="Zinc finger protein 770"/>
    <property type="match status" value="1"/>
</dbReference>
<dbReference type="FunFam" id="3.30.160.60:FF:003577">
    <property type="entry name" value="Zinc finger protein 770"/>
    <property type="match status" value="1"/>
</dbReference>
<dbReference type="FunFam" id="3.30.160.60:FF:000047">
    <property type="entry name" value="zinc finger protein OZF"/>
    <property type="match status" value="1"/>
</dbReference>
<dbReference type="Gene3D" id="6.10.140.140">
    <property type="match status" value="1"/>
</dbReference>
<dbReference type="Gene3D" id="3.30.160.60">
    <property type="entry name" value="Classic Zinc Finger"/>
    <property type="match status" value="17"/>
</dbReference>
<dbReference type="InterPro" id="IPR001909">
    <property type="entry name" value="KRAB"/>
</dbReference>
<dbReference type="InterPro" id="IPR036051">
    <property type="entry name" value="KRAB_dom_sf"/>
</dbReference>
<dbReference type="InterPro" id="IPR036236">
    <property type="entry name" value="Znf_C2H2_sf"/>
</dbReference>
<dbReference type="InterPro" id="IPR013087">
    <property type="entry name" value="Znf_C2H2_type"/>
</dbReference>
<dbReference type="PANTHER" id="PTHR24381:SF393">
    <property type="entry name" value="CHROMATIN-LINKED ADAPTOR FOR MSL PROTEINS, ISOFORM B"/>
    <property type="match status" value="1"/>
</dbReference>
<dbReference type="PANTHER" id="PTHR24381">
    <property type="entry name" value="ZINC FINGER PROTEIN"/>
    <property type="match status" value="1"/>
</dbReference>
<dbReference type="Pfam" id="PF01352">
    <property type="entry name" value="KRAB"/>
    <property type="match status" value="1"/>
</dbReference>
<dbReference type="Pfam" id="PF00096">
    <property type="entry name" value="zf-C2H2"/>
    <property type="match status" value="12"/>
</dbReference>
<dbReference type="SMART" id="SM00355">
    <property type="entry name" value="ZnF_C2H2"/>
    <property type="match status" value="17"/>
</dbReference>
<dbReference type="SUPFAM" id="SSF57667">
    <property type="entry name" value="beta-beta-alpha zinc fingers"/>
    <property type="match status" value="11"/>
</dbReference>
<dbReference type="SUPFAM" id="SSF109640">
    <property type="entry name" value="KRAB domain (Kruppel-associated box)"/>
    <property type="match status" value="1"/>
</dbReference>
<dbReference type="PROSITE" id="PS50805">
    <property type="entry name" value="KRAB"/>
    <property type="match status" value="1"/>
</dbReference>
<dbReference type="PROSITE" id="PS00028">
    <property type="entry name" value="ZINC_FINGER_C2H2_1"/>
    <property type="match status" value="16"/>
</dbReference>
<dbReference type="PROSITE" id="PS50157">
    <property type="entry name" value="ZINC_FINGER_C2H2_2"/>
    <property type="match status" value="17"/>
</dbReference>